<feature type="chain" id="PRO_0000149461" description="Adenine phosphoribosyltransferase">
    <location>
        <begin position="1"/>
        <end position="178"/>
    </location>
</feature>
<dbReference type="EC" id="2.4.2.7" evidence="1"/>
<dbReference type="EMBL" id="AF421216">
    <property type="protein sequence ID" value="AAL16894.1"/>
    <property type="molecule type" value="Genomic_DNA"/>
</dbReference>
<dbReference type="SMR" id="Q93AJ8"/>
<dbReference type="STRING" id="1901.BB341_24235"/>
<dbReference type="eggNOG" id="COG0503">
    <property type="taxonomic scope" value="Bacteria"/>
</dbReference>
<dbReference type="UniPathway" id="UPA00588">
    <property type="reaction ID" value="UER00646"/>
</dbReference>
<dbReference type="GO" id="GO:0005737">
    <property type="term" value="C:cytoplasm"/>
    <property type="evidence" value="ECO:0007669"/>
    <property type="project" value="UniProtKB-SubCell"/>
</dbReference>
<dbReference type="GO" id="GO:0002055">
    <property type="term" value="F:adenine binding"/>
    <property type="evidence" value="ECO:0007669"/>
    <property type="project" value="TreeGrafter"/>
</dbReference>
<dbReference type="GO" id="GO:0003999">
    <property type="term" value="F:adenine phosphoribosyltransferase activity"/>
    <property type="evidence" value="ECO:0007669"/>
    <property type="project" value="UniProtKB-UniRule"/>
</dbReference>
<dbReference type="GO" id="GO:0016208">
    <property type="term" value="F:AMP binding"/>
    <property type="evidence" value="ECO:0007669"/>
    <property type="project" value="TreeGrafter"/>
</dbReference>
<dbReference type="GO" id="GO:0006168">
    <property type="term" value="P:adenine salvage"/>
    <property type="evidence" value="ECO:0007669"/>
    <property type="project" value="InterPro"/>
</dbReference>
<dbReference type="GO" id="GO:0044209">
    <property type="term" value="P:AMP salvage"/>
    <property type="evidence" value="ECO:0007669"/>
    <property type="project" value="UniProtKB-UniRule"/>
</dbReference>
<dbReference type="GO" id="GO:0006166">
    <property type="term" value="P:purine ribonucleoside salvage"/>
    <property type="evidence" value="ECO:0007669"/>
    <property type="project" value="UniProtKB-KW"/>
</dbReference>
<dbReference type="CDD" id="cd06223">
    <property type="entry name" value="PRTases_typeI"/>
    <property type="match status" value="1"/>
</dbReference>
<dbReference type="FunFam" id="3.40.50.2020:FF:000021">
    <property type="entry name" value="Adenine phosphoribosyltransferase"/>
    <property type="match status" value="1"/>
</dbReference>
<dbReference type="Gene3D" id="3.40.50.2020">
    <property type="match status" value="1"/>
</dbReference>
<dbReference type="HAMAP" id="MF_00004">
    <property type="entry name" value="Aden_phosphoribosyltr"/>
    <property type="match status" value="1"/>
</dbReference>
<dbReference type="InterPro" id="IPR005764">
    <property type="entry name" value="Ade_phspho_trans"/>
</dbReference>
<dbReference type="InterPro" id="IPR000836">
    <property type="entry name" value="PRibTrfase_dom"/>
</dbReference>
<dbReference type="InterPro" id="IPR029057">
    <property type="entry name" value="PRTase-like"/>
</dbReference>
<dbReference type="InterPro" id="IPR050054">
    <property type="entry name" value="UPRTase/APRTase"/>
</dbReference>
<dbReference type="NCBIfam" id="TIGR01090">
    <property type="entry name" value="apt"/>
    <property type="match status" value="1"/>
</dbReference>
<dbReference type="NCBIfam" id="NF002634">
    <property type="entry name" value="PRK02304.1-3"/>
    <property type="match status" value="1"/>
</dbReference>
<dbReference type="NCBIfam" id="NF002636">
    <property type="entry name" value="PRK02304.1-5"/>
    <property type="match status" value="1"/>
</dbReference>
<dbReference type="PANTHER" id="PTHR32315">
    <property type="entry name" value="ADENINE PHOSPHORIBOSYLTRANSFERASE"/>
    <property type="match status" value="1"/>
</dbReference>
<dbReference type="PANTHER" id="PTHR32315:SF3">
    <property type="entry name" value="ADENINE PHOSPHORIBOSYLTRANSFERASE"/>
    <property type="match status" value="1"/>
</dbReference>
<dbReference type="Pfam" id="PF00156">
    <property type="entry name" value="Pribosyltran"/>
    <property type="match status" value="1"/>
</dbReference>
<dbReference type="SUPFAM" id="SSF53271">
    <property type="entry name" value="PRTase-like"/>
    <property type="match status" value="1"/>
</dbReference>
<dbReference type="PROSITE" id="PS00103">
    <property type="entry name" value="PUR_PYR_PR_TRANSFER"/>
    <property type="match status" value="1"/>
</dbReference>
<protein>
    <recommendedName>
        <fullName evidence="1">Adenine phosphoribosyltransferase</fullName>
        <shortName evidence="1">APRT</shortName>
        <ecNumber evidence="1">2.4.2.7</ecNumber>
    </recommendedName>
</protein>
<sequence>MTGGAQELLLSRIRDVPDYPQPGVVFKDITPLLADPEAFSVLTEALAEVCVRHGATKVVGLEARGFILGAPVAVRAGLGFIPIRKAGKLPGATLSQAYALEYGTAEIEVHAEDLTPDDRVMVIDDVLATGGTAAAAMELIRRGGADVAGLAVLMELGFLGGRARLEPTLAALEALLAL</sequence>
<evidence type="ECO:0000255" key="1">
    <source>
        <dbReference type="HAMAP-Rule" id="MF_00004"/>
    </source>
</evidence>
<name>APT_STRCL</name>
<accession>Q93AJ8</accession>
<comment type="function">
    <text evidence="1">Catalyzes a salvage reaction resulting in the formation of AMP, that is energically less costly than de novo synthesis.</text>
</comment>
<comment type="catalytic activity">
    <reaction evidence="1">
        <text>AMP + diphosphate = 5-phospho-alpha-D-ribose 1-diphosphate + adenine</text>
        <dbReference type="Rhea" id="RHEA:16609"/>
        <dbReference type="ChEBI" id="CHEBI:16708"/>
        <dbReference type="ChEBI" id="CHEBI:33019"/>
        <dbReference type="ChEBI" id="CHEBI:58017"/>
        <dbReference type="ChEBI" id="CHEBI:456215"/>
        <dbReference type="EC" id="2.4.2.7"/>
    </reaction>
</comment>
<comment type="pathway">
    <text evidence="1">Purine metabolism; AMP biosynthesis via salvage pathway; AMP from adenine: step 1/1.</text>
</comment>
<comment type="subunit">
    <text evidence="1">Homodimer.</text>
</comment>
<comment type="subcellular location">
    <subcellularLocation>
        <location evidence="1">Cytoplasm</location>
    </subcellularLocation>
</comment>
<comment type="similarity">
    <text evidence="1">Belongs to the purine/pyrimidine phosphoribosyltransferase family.</text>
</comment>
<gene>
    <name evidence="1" type="primary">apt</name>
</gene>
<reference key="1">
    <citation type="submission" date="2001-09" db="EMBL/GenBank/DDBJ databases">
        <title>Cloning and characterization of a ppGpp synthetase gene (relA) of Streptomyces clavuligerus ATCC27064.</title>
        <authorList>
            <person name="Jin W."/>
            <person name="Kim J.Y."/>
            <person name="Lee K.J."/>
        </authorList>
    </citation>
    <scope>NUCLEOTIDE SEQUENCE [GENOMIC DNA]</scope>
    <source>
        <strain>ATCC 27064 / DSM 738 / JCM 4710 / NBRC 13307 / NCIMB 12785 / NRRL 3585 / VKM Ac-602</strain>
    </source>
</reference>
<keyword id="KW-0963">Cytoplasm</keyword>
<keyword id="KW-0328">Glycosyltransferase</keyword>
<keyword id="KW-0660">Purine salvage</keyword>
<keyword id="KW-0808">Transferase</keyword>
<organism>
    <name type="scientific">Streptomyces clavuligerus</name>
    <dbReference type="NCBI Taxonomy" id="1901"/>
    <lineage>
        <taxon>Bacteria</taxon>
        <taxon>Bacillati</taxon>
        <taxon>Actinomycetota</taxon>
        <taxon>Actinomycetes</taxon>
        <taxon>Kitasatosporales</taxon>
        <taxon>Streptomycetaceae</taxon>
        <taxon>Streptomyces</taxon>
    </lineage>
</organism>
<proteinExistence type="inferred from homology"/>